<sequence>MKKEDLRIVYMGTPDFAVEALQCLVEGGYNVVGVITMPDKPAGRGHKIQYSPVKQYALDHQLPLLQPEKLKDEEFIQALREWKADLQIVVAFRMLPEVVWNMPRLGTFNLHASLLPQYRGAAPINWAVINGDTETGITTFFLKHEIDTGEVIQQVRIPIADTDNVEIVHDKLMHLGGRLVIETVDAILEGKVKSIPQEEMAVAGELRPAPKIFKETCRIDWNQPVKRVYDFIRGLSPYPAAWSELVNPEGEAVVVKIFESEKLPKVHTLAPGSIVTDGKNFLRVAVPDGFVNVLSLQLPGKKRLKTDELLRGFHLTEAFKMKAV</sequence>
<reference key="1">
    <citation type="journal article" date="2004" name="Proc. Natl. Acad. Sci. U.S.A.">
        <title>Genomic analysis of Bacteroides fragilis reveals extensive DNA inversions regulating cell surface adaptation.</title>
        <authorList>
            <person name="Kuwahara T."/>
            <person name="Yamashita A."/>
            <person name="Hirakawa H."/>
            <person name="Nakayama H."/>
            <person name="Toh H."/>
            <person name="Okada N."/>
            <person name="Kuhara S."/>
            <person name="Hattori M."/>
            <person name="Hayashi T."/>
            <person name="Ohnishi Y."/>
        </authorList>
    </citation>
    <scope>NUCLEOTIDE SEQUENCE [LARGE SCALE GENOMIC DNA]</scope>
    <source>
        <strain>YCH46</strain>
    </source>
</reference>
<protein>
    <recommendedName>
        <fullName evidence="1">Methionyl-tRNA formyltransferase</fullName>
        <ecNumber evidence="1">2.1.2.9</ecNumber>
    </recommendedName>
</protein>
<evidence type="ECO:0000255" key="1">
    <source>
        <dbReference type="HAMAP-Rule" id="MF_00182"/>
    </source>
</evidence>
<organism>
    <name type="scientific">Bacteroides fragilis (strain YCH46)</name>
    <dbReference type="NCBI Taxonomy" id="295405"/>
    <lineage>
        <taxon>Bacteria</taxon>
        <taxon>Pseudomonadati</taxon>
        <taxon>Bacteroidota</taxon>
        <taxon>Bacteroidia</taxon>
        <taxon>Bacteroidales</taxon>
        <taxon>Bacteroidaceae</taxon>
        <taxon>Bacteroides</taxon>
    </lineage>
</organism>
<keyword id="KW-0648">Protein biosynthesis</keyword>
<keyword id="KW-0808">Transferase</keyword>
<name>FMT_BACFR</name>
<feature type="chain" id="PRO_0000082913" description="Methionyl-tRNA formyltransferase">
    <location>
        <begin position="1"/>
        <end position="324"/>
    </location>
</feature>
<feature type="binding site" evidence="1">
    <location>
        <begin position="113"/>
        <end position="116"/>
    </location>
    <ligand>
        <name>(6S)-5,6,7,8-tetrahydrofolate</name>
        <dbReference type="ChEBI" id="CHEBI:57453"/>
    </ligand>
</feature>
<dbReference type="EC" id="2.1.2.9" evidence="1"/>
<dbReference type="EMBL" id="AP006841">
    <property type="protein sequence ID" value="BAD50645.1"/>
    <property type="molecule type" value="Genomic_DNA"/>
</dbReference>
<dbReference type="RefSeq" id="WP_008770001.1">
    <property type="nucleotide sequence ID" value="NZ_UYXF01000018.1"/>
</dbReference>
<dbReference type="RefSeq" id="YP_101179.1">
    <property type="nucleotide sequence ID" value="NC_006347.1"/>
</dbReference>
<dbReference type="SMR" id="Q64PD6"/>
<dbReference type="STRING" id="295405.BF3903"/>
<dbReference type="GeneID" id="60366252"/>
<dbReference type="KEGG" id="bfr:BF3903"/>
<dbReference type="PATRIC" id="fig|295405.11.peg.3747"/>
<dbReference type="HOGENOM" id="CLU_033347_1_1_10"/>
<dbReference type="OrthoDB" id="9802815at2"/>
<dbReference type="Proteomes" id="UP000002197">
    <property type="component" value="Chromosome"/>
</dbReference>
<dbReference type="GO" id="GO:0005829">
    <property type="term" value="C:cytosol"/>
    <property type="evidence" value="ECO:0007669"/>
    <property type="project" value="TreeGrafter"/>
</dbReference>
<dbReference type="GO" id="GO:0004479">
    <property type="term" value="F:methionyl-tRNA formyltransferase activity"/>
    <property type="evidence" value="ECO:0007669"/>
    <property type="project" value="UniProtKB-UniRule"/>
</dbReference>
<dbReference type="CDD" id="cd08646">
    <property type="entry name" value="FMT_core_Met-tRNA-FMT_N"/>
    <property type="match status" value="1"/>
</dbReference>
<dbReference type="CDD" id="cd08704">
    <property type="entry name" value="Met_tRNA_FMT_C"/>
    <property type="match status" value="1"/>
</dbReference>
<dbReference type="Gene3D" id="3.40.50.12230">
    <property type="match status" value="1"/>
</dbReference>
<dbReference type="HAMAP" id="MF_00182">
    <property type="entry name" value="Formyl_trans"/>
    <property type="match status" value="1"/>
</dbReference>
<dbReference type="InterPro" id="IPR005794">
    <property type="entry name" value="Fmt"/>
</dbReference>
<dbReference type="InterPro" id="IPR005793">
    <property type="entry name" value="Formyl_trans_C"/>
</dbReference>
<dbReference type="InterPro" id="IPR002376">
    <property type="entry name" value="Formyl_transf_N"/>
</dbReference>
<dbReference type="InterPro" id="IPR036477">
    <property type="entry name" value="Formyl_transf_N_sf"/>
</dbReference>
<dbReference type="InterPro" id="IPR011034">
    <property type="entry name" value="Formyl_transferase-like_C_sf"/>
</dbReference>
<dbReference type="InterPro" id="IPR044135">
    <property type="entry name" value="Met-tRNA-FMT_C"/>
</dbReference>
<dbReference type="InterPro" id="IPR041711">
    <property type="entry name" value="Met-tRNA-FMT_N"/>
</dbReference>
<dbReference type="NCBIfam" id="TIGR00460">
    <property type="entry name" value="fmt"/>
    <property type="match status" value="1"/>
</dbReference>
<dbReference type="PANTHER" id="PTHR11138">
    <property type="entry name" value="METHIONYL-TRNA FORMYLTRANSFERASE"/>
    <property type="match status" value="1"/>
</dbReference>
<dbReference type="PANTHER" id="PTHR11138:SF5">
    <property type="entry name" value="METHIONYL-TRNA FORMYLTRANSFERASE, MITOCHONDRIAL"/>
    <property type="match status" value="1"/>
</dbReference>
<dbReference type="Pfam" id="PF02911">
    <property type="entry name" value="Formyl_trans_C"/>
    <property type="match status" value="1"/>
</dbReference>
<dbReference type="Pfam" id="PF00551">
    <property type="entry name" value="Formyl_trans_N"/>
    <property type="match status" value="1"/>
</dbReference>
<dbReference type="SUPFAM" id="SSF50486">
    <property type="entry name" value="FMT C-terminal domain-like"/>
    <property type="match status" value="1"/>
</dbReference>
<dbReference type="SUPFAM" id="SSF53328">
    <property type="entry name" value="Formyltransferase"/>
    <property type="match status" value="1"/>
</dbReference>
<comment type="function">
    <text evidence="1">Attaches a formyl group to the free amino group of methionyl-tRNA(fMet). The formyl group appears to play a dual role in the initiator identity of N-formylmethionyl-tRNA by promoting its recognition by IF2 and preventing the misappropriation of this tRNA by the elongation apparatus.</text>
</comment>
<comment type="catalytic activity">
    <reaction evidence="1">
        <text>L-methionyl-tRNA(fMet) + (6R)-10-formyltetrahydrofolate = N-formyl-L-methionyl-tRNA(fMet) + (6S)-5,6,7,8-tetrahydrofolate + H(+)</text>
        <dbReference type="Rhea" id="RHEA:24380"/>
        <dbReference type="Rhea" id="RHEA-COMP:9952"/>
        <dbReference type="Rhea" id="RHEA-COMP:9953"/>
        <dbReference type="ChEBI" id="CHEBI:15378"/>
        <dbReference type="ChEBI" id="CHEBI:57453"/>
        <dbReference type="ChEBI" id="CHEBI:78530"/>
        <dbReference type="ChEBI" id="CHEBI:78844"/>
        <dbReference type="ChEBI" id="CHEBI:195366"/>
        <dbReference type="EC" id="2.1.2.9"/>
    </reaction>
</comment>
<comment type="similarity">
    <text evidence="1">Belongs to the Fmt family.</text>
</comment>
<accession>Q64PD6</accession>
<proteinExistence type="inferred from homology"/>
<gene>
    <name evidence="1" type="primary">fmt</name>
    <name type="ordered locus">BF3903</name>
</gene>